<sequence length="297" mass="33485">MTGLYELVWRVLHALLCLHLTLTSWLRVRFGTWNWIWRRCCRAASAAVLAPLGFTLRKPRAVGRNRRHHRHPHGGPGPGPGPAATHPRLRWRADVRSLQKLPVHMGLLVTEEVQEPSFSDIASLVVWCMAVGISYISVYDHQGIFKRNNSRLMDEILKQQQELLGQDCSKYSAEFANSNDKDDQDLNCPSAVKVLSPEDGKADIVRAAQDFCQLVAQQQRKPTDLDVDLLGSLLSSHGFPDPDLVLKFGPVDSTLGFLPWQIRLTEIVSLPSHLNISYEDFFSALRQYAACEQRLGK</sequence>
<organism>
    <name type="scientific">Mus musculus</name>
    <name type="common">Mouse</name>
    <dbReference type="NCBI Taxonomy" id="10090"/>
    <lineage>
        <taxon>Eukaryota</taxon>
        <taxon>Metazoa</taxon>
        <taxon>Chordata</taxon>
        <taxon>Craniata</taxon>
        <taxon>Vertebrata</taxon>
        <taxon>Euteleostomi</taxon>
        <taxon>Mammalia</taxon>
        <taxon>Eutheria</taxon>
        <taxon>Euarchontoglires</taxon>
        <taxon>Glires</taxon>
        <taxon>Rodentia</taxon>
        <taxon>Myomorpha</taxon>
        <taxon>Muroidea</taxon>
        <taxon>Muridae</taxon>
        <taxon>Murinae</taxon>
        <taxon>Mus</taxon>
        <taxon>Mus</taxon>
    </lineage>
</organism>
<comment type="function">
    <text evidence="1 5">With DHDDS, forms the dehydrodolichyl diphosphate synthase (DDS) complex, an essential component of the dolichol monophosphate (Dol-P) biosynthetic machinery (PubMed:25066056). Both subunits contribute to enzymatic activity, i.e. condensation of multiple copies of isopentenyl pyrophosphate (IPP) to farnesyl pyrophosphate (FPP) to produce dehydrodolichyl diphosphate (Dedol-PP), a precursor of dolichol phosphate which is utilized as a sugar carrier in protein glycosylation in the endoplasmic reticulum (ER) (By similarity). Synthesizes long-chain polyprenols, mostly of C95 and C100 chain length (By similarity). Regulates the glycosylation and stability of nascent NPC2, thereby promoting trafficking of LDL-derived cholesterol (By similarity). Acts as a specific receptor for the N-terminus of Nogo-B, a neural and cardiovascular regulator (By similarity).</text>
</comment>
<comment type="catalytic activity">
    <reaction evidence="1">
        <text>n isopentenyl diphosphate + (2E,6E)-farnesyl diphosphate = a di-trans,poly-cis-polyprenyl diphosphate + n diphosphate</text>
        <dbReference type="Rhea" id="RHEA:53008"/>
        <dbReference type="Rhea" id="RHEA-COMP:19494"/>
        <dbReference type="ChEBI" id="CHEBI:33019"/>
        <dbReference type="ChEBI" id="CHEBI:128769"/>
        <dbReference type="ChEBI" id="CHEBI:136960"/>
        <dbReference type="ChEBI" id="CHEBI:175763"/>
        <dbReference type="EC" id="2.5.1.87"/>
    </reaction>
</comment>
<comment type="cofactor">
    <cofactor evidence="1">
        <name>Mg(2+)</name>
        <dbReference type="ChEBI" id="CHEBI:18420"/>
    </cofactor>
</comment>
<comment type="pathway">
    <text evidence="1">Protein modification; protein glycosylation.</text>
</comment>
<comment type="pathway">
    <text evidence="1">Lipid metabolism.</text>
</comment>
<comment type="subunit">
    <text evidence="1">The active dehydrodolichyl diphosphate synthase complex is a heterotetramer composed of a dimer of heterodimer of DHDDS and NUS1. Interacts with NPC2.</text>
</comment>
<comment type="subcellular location">
    <subcellularLocation>
        <location evidence="1">Endoplasmic reticulum membrane</location>
        <topology evidence="1">Multi-pass membrane protein</topology>
    </subcellularLocation>
    <text evidence="1">Colocalizes with Nogo-B during VEGF and wound healing angiogenesis.</text>
</comment>
<comment type="tissue specificity">
    <text evidence="4">Highly expressed in heart, liver, kidney and pancreas.</text>
</comment>
<comment type="domain">
    <text evidence="1">Contains the RXG motif, which is important for substrate binding and prenyltransferase activity. The catalytic site at NUS1-DHDDS interface accomodates both the allylic and the homoallylic IPP substrates to the S1 and S2 pockets respectively. The beta-phosphate groups of IPP substrates form hydrogen bonds with the RXG motif of NUS1 and conserved residues of DHDDS ('Arg-85', 'Arg-205', 'Arg-211' and 'Ser-213'), while the allylic isopentenyl group is pointed toward the hydrophobic tunnel of the S1 pocket where the product elongation occurs.</text>
</comment>
<comment type="disruption phenotype">
    <text evidence="5 6">Embryonic lethality before 6.5 day post coitum (dpc), as well as loss of N-glycosylation (PubMed:25066056, PubMed:26755743). Defective cis-prenyltransferase activity and cholesterol levels in isolated fibroblasts (PubMed:26755743). Conditional deletion in endothelial cells results in embryonic lethality due to vascular development defects in yolk sac and embryo (PubMed:26755743).</text>
</comment>
<comment type="miscellaneous">
    <text evidence="1">NUS1 seems to exist in two topological orientations, a minor glycosylated species with its C-terminus oriented towards the lumen regulating NPC2 stability, and a major fraction oriented with its C-terminus directed towards the cytosol where it regulates cis-IPTase activity.</text>
</comment>
<comment type="similarity">
    <text evidence="7">Belongs to the UPP synthase family.</text>
</comment>
<comment type="sequence caution" evidence="7">
    <conflict type="frameshift">
        <sequence resource="EMBL-CDS" id="AAH18372"/>
    </conflict>
</comment>
<comment type="sequence caution" evidence="7">
    <conflict type="frameshift">
        <sequence resource="EMBL-CDS" id="BAE33349"/>
    </conflict>
</comment>
<dbReference type="EC" id="2.5.1.87" evidence="1"/>
<dbReference type="EMBL" id="AK155620">
    <property type="protein sequence ID" value="BAE33349.1"/>
    <property type="status" value="ALT_SEQ"/>
    <property type="molecule type" value="mRNA"/>
</dbReference>
<dbReference type="EMBL" id="AK167741">
    <property type="protein sequence ID" value="BAE39779.1"/>
    <property type="molecule type" value="mRNA"/>
</dbReference>
<dbReference type="EMBL" id="AK167939">
    <property type="protein sequence ID" value="BAE39943.1"/>
    <property type="molecule type" value="mRNA"/>
</dbReference>
<dbReference type="EMBL" id="BC003223">
    <property type="protein sequence ID" value="AAH03223.1"/>
    <property type="molecule type" value="mRNA"/>
</dbReference>
<dbReference type="EMBL" id="BC018372">
    <property type="protein sequence ID" value="AAH18372.1"/>
    <property type="status" value="ALT_FRAME"/>
    <property type="molecule type" value="mRNA"/>
</dbReference>
<dbReference type="CCDS" id="CCDS23841.1"/>
<dbReference type="RefSeq" id="NP_084526.1">
    <property type="nucleotide sequence ID" value="NM_030250.2"/>
</dbReference>
<dbReference type="SMR" id="Q99LJ8"/>
<dbReference type="BioGRID" id="206326">
    <property type="interactions" value="1"/>
</dbReference>
<dbReference type="FunCoup" id="Q99LJ8">
    <property type="interactions" value="2009"/>
</dbReference>
<dbReference type="IntAct" id="Q99LJ8">
    <property type="interactions" value="1"/>
</dbReference>
<dbReference type="MINT" id="Q99LJ8"/>
<dbReference type="STRING" id="10090.ENSMUSP00000023830"/>
<dbReference type="GlyCosmos" id="Q99LJ8">
    <property type="glycosylation" value="2 sites, No reported glycans"/>
</dbReference>
<dbReference type="GlyGen" id="Q99LJ8">
    <property type="glycosylation" value="2 sites"/>
</dbReference>
<dbReference type="PhosphoSitePlus" id="Q99LJ8"/>
<dbReference type="SwissPalm" id="Q99LJ8"/>
<dbReference type="PaxDb" id="10090-ENSMUSP00000023830"/>
<dbReference type="ProteomicsDB" id="287419"/>
<dbReference type="Antibodypedia" id="32563">
    <property type="antibodies" value="110 antibodies from 21 providers"/>
</dbReference>
<dbReference type="Ensembl" id="ENSMUST00000023830.16">
    <property type="protein sequence ID" value="ENSMUSP00000023830.9"/>
    <property type="gene ID" value="ENSMUSG00000023068.17"/>
</dbReference>
<dbReference type="GeneID" id="52014"/>
<dbReference type="KEGG" id="mmu:52014"/>
<dbReference type="UCSC" id="uc007fbi.2">
    <property type="organism name" value="mouse"/>
</dbReference>
<dbReference type="AGR" id="MGI:1196365"/>
<dbReference type="CTD" id="116150"/>
<dbReference type="MGI" id="MGI:1196365">
    <property type="gene designation" value="Nus1"/>
</dbReference>
<dbReference type="VEuPathDB" id="HostDB:ENSMUSG00000023068"/>
<dbReference type="eggNOG" id="KOG2818">
    <property type="taxonomic scope" value="Eukaryota"/>
</dbReference>
<dbReference type="GeneTree" id="ENSGT00390000003223"/>
<dbReference type="HOGENOM" id="CLU_051870_2_1_1"/>
<dbReference type="InParanoid" id="Q99LJ8"/>
<dbReference type="OMA" id="AWSSCAG"/>
<dbReference type="OrthoDB" id="19639at2759"/>
<dbReference type="PhylomeDB" id="Q99LJ8"/>
<dbReference type="TreeFam" id="TF332448"/>
<dbReference type="BRENDA" id="2.5.1.87">
    <property type="organism ID" value="3474"/>
</dbReference>
<dbReference type="Reactome" id="R-MMU-446199">
    <property type="pathway name" value="Synthesis of Dolichyl-phosphate"/>
</dbReference>
<dbReference type="UniPathway" id="UPA00378"/>
<dbReference type="BioGRID-ORCS" id="52014">
    <property type="hits" value="22 hits in 79 CRISPR screens"/>
</dbReference>
<dbReference type="ChiTaRS" id="Nus1">
    <property type="organism name" value="mouse"/>
</dbReference>
<dbReference type="PRO" id="PR:Q99LJ8"/>
<dbReference type="Proteomes" id="UP000000589">
    <property type="component" value="Chromosome 10"/>
</dbReference>
<dbReference type="RNAct" id="Q99LJ8">
    <property type="molecule type" value="protein"/>
</dbReference>
<dbReference type="Bgee" id="ENSMUSG00000023068">
    <property type="expression patterns" value="Expressed in adult mammalian kidney and 261 other cell types or tissues"/>
</dbReference>
<dbReference type="GO" id="GO:1904423">
    <property type="term" value="C:dehydrodolichyl diphosphate synthase complex"/>
    <property type="evidence" value="ECO:0000250"/>
    <property type="project" value="UniProtKB"/>
</dbReference>
<dbReference type="GO" id="GO:0005789">
    <property type="term" value="C:endoplasmic reticulum membrane"/>
    <property type="evidence" value="ECO:0000266"/>
    <property type="project" value="MGI"/>
</dbReference>
<dbReference type="GO" id="GO:0016020">
    <property type="term" value="C:membrane"/>
    <property type="evidence" value="ECO:0000315"/>
    <property type="project" value="MGI"/>
</dbReference>
<dbReference type="GO" id="GO:0045547">
    <property type="term" value="F:ditrans,polycis-polyprenyl diphosphate synthase [(2E,6E)-farnesyl diphosphate specific] activity"/>
    <property type="evidence" value="ECO:0000250"/>
    <property type="project" value="UniProtKB"/>
</dbReference>
<dbReference type="GO" id="GO:0004659">
    <property type="term" value="F:prenyltransferase activity"/>
    <property type="evidence" value="ECO:0000315"/>
    <property type="project" value="MGI"/>
</dbReference>
<dbReference type="GO" id="GO:0001525">
    <property type="term" value="P:angiogenesis"/>
    <property type="evidence" value="ECO:0007669"/>
    <property type="project" value="UniProtKB-KW"/>
</dbReference>
<dbReference type="GO" id="GO:0030154">
    <property type="term" value="P:cell differentiation"/>
    <property type="evidence" value="ECO:0007669"/>
    <property type="project" value="UniProtKB-KW"/>
</dbReference>
<dbReference type="GO" id="GO:0042632">
    <property type="term" value="P:cholesterol homeostasis"/>
    <property type="evidence" value="ECO:0000315"/>
    <property type="project" value="MGI"/>
</dbReference>
<dbReference type="GO" id="GO:0019408">
    <property type="term" value="P:dolichol biosynthetic process"/>
    <property type="evidence" value="ECO:0000266"/>
    <property type="project" value="MGI"/>
</dbReference>
<dbReference type="GO" id="GO:0006489">
    <property type="term" value="P:dolichyl diphosphate biosynthetic process"/>
    <property type="evidence" value="ECO:0000250"/>
    <property type="project" value="UniProtKB"/>
</dbReference>
<dbReference type="GO" id="GO:0043536">
    <property type="term" value="P:positive regulation of blood vessel endothelial cell migration"/>
    <property type="evidence" value="ECO:0007669"/>
    <property type="project" value="Ensembl"/>
</dbReference>
<dbReference type="GO" id="GO:0035268">
    <property type="term" value="P:protein mannosylation"/>
    <property type="evidence" value="ECO:0000315"/>
    <property type="project" value="MGI"/>
</dbReference>
<dbReference type="GO" id="GO:0032383">
    <property type="term" value="P:regulation of intracellular cholesterol transport"/>
    <property type="evidence" value="ECO:0000315"/>
    <property type="project" value="MGI"/>
</dbReference>
<dbReference type="GO" id="GO:0055092">
    <property type="term" value="P:sterol homeostasis"/>
    <property type="evidence" value="ECO:0000315"/>
    <property type="project" value="MGI"/>
</dbReference>
<dbReference type="GO" id="GO:0038084">
    <property type="term" value="P:vascular endothelial growth factor signaling pathway"/>
    <property type="evidence" value="ECO:0007669"/>
    <property type="project" value="Ensembl"/>
</dbReference>
<dbReference type="DisProt" id="DP01304"/>
<dbReference type="FunFam" id="3.40.1180.10:FF:000008">
    <property type="entry name" value="NUS1, dehydrodolichyl diphosphate synthase subunit"/>
    <property type="match status" value="1"/>
</dbReference>
<dbReference type="Gene3D" id="3.40.1180.10">
    <property type="entry name" value="Decaprenyl diphosphate synthase-like"/>
    <property type="match status" value="1"/>
</dbReference>
<dbReference type="InterPro" id="IPR038887">
    <property type="entry name" value="Nus1/NgBR"/>
</dbReference>
<dbReference type="InterPro" id="IPR001441">
    <property type="entry name" value="UPP_synth-like"/>
</dbReference>
<dbReference type="InterPro" id="IPR036424">
    <property type="entry name" value="UPP_synth-like_sf"/>
</dbReference>
<dbReference type="PANTHER" id="PTHR21528">
    <property type="entry name" value="DEHYDRODOLICHYL DIPHOSPHATE SYNTHASE COMPLEX SUBUNIT NUS1"/>
    <property type="match status" value="1"/>
</dbReference>
<dbReference type="PANTHER" id="PTHR21528:SF0">
    <property type="entry name" value="DEHYDRODOLICHYL DIPHOSPHATE SYNTHASE COMPLEX SUBUNIT NUS1"/>
    <property type="match status" value="1"/>
</dbReference>
<dbReference type="Pfam" id="PF01255">
    <property type="entry name" value="Prenyltransf"/>
    <property type="match status" value="1"/>
</dbReference>
<dbReference type="SUPFAM" id="SSF64005">
    <property type="entry name" value="Undecaprenyl diphosphate synthase"/>
    <property type="match status" value="1"/>
</dbReference>
<keyword id="KW-0037">Angiogenesis</keyword>
<keyword id="KW-0217">Developmental protein</keyword>
<keyword id="KW-0221">Differentiation</keyword>
<keyword id="KW-0256">Endoplasmic reticulum</keyword>
<keyword id="KW-0325">Glycoprotein</keyword>
<keyword id="KW-0443">Lipid metabolism</keyword>
<keyword id="KW-0460">Magnesium</keyword>
<keyword id="KW-0472">Membrane</keyword>
<keyword id="KW-0675">Receptor</keyword>
<keyword id="KW-1185">Reference proteome</keyword>
<keyword id="KW-0808">Transferase</keyword>
<keyword id="KW-0812">Transmembrane</keyword>
<keyword id="KW-1133">Transmembrane helix</keyword>
<proteinExistence type="evidence at transcript level"/>
<protein>
    <recommendedName>
        <fullName evidence="7">Dehydrodolichyl diphosphate synthase complex subunit Nus1</fullName>
        <ecNumber evidence="1">2.5.1.87</ecNumber>
    </recommendedName>
    <alternativeName>
        <fullName evidence="1">Nogo-B receptor</fullName>
        <shortName evidence="1">NgBR</shortName>
    </alternativeName>
    <alternativeName>
        <fullName evidence="7">Nuclear undecaprenyl pyrophosphate synthase 1 homolog</fullName>
    </alternativeName>
</protein>
<accession>Q99LJ8</accession>
<accession>Q0P6D7</accession>
<accession>Q3TIA3</accession>
<accession>Q3TIR7</accession>
<accession>Q3U1Z4</accession>
<evidence type="ECO:0000250" key="1">
    <source>
        <dbReference type="UniProtKB" id="Q96E22"/>
    </source>
</evidence>
<evidence type="ECO:0000255" key="2"/>
<evidence type="ECO:0000256" key="3">
    <source>
        <dbReference type="SAM" id="MobiDB-lite"/>
    </source>
</evidence>
<evidence type="ECO:0000269" key="4">
    <source>
    </source>
</evidence>
<evidence type="ECO:0000269" key="5">
    <source>
    </source>
</evidence>
<evidence type="ECO:0000269" key="6">
    <source>
    </source>
</evidence>
<evidence type="ECO:0000305" key="7"/>
<evidence type="ECO:0000312" key="8">
    <source>
        <dbReference type="MGI" id="MGI:1196365"/>
    </source>
</evidence>
<name>NGBR_MOUSE</name>
<reference key="1">
    <citation type="journal article" date="2005" name="Science">
        <title>The transcriptional landscape of the mammalian genome.</title>
        <authorList>
            <person name="Carninci P."/>
            <person name="Kasukawa T."/>
            <person name="Katayama S."/>
            <person name="Gough J."/>
            <person name="Frith M.C."/>
            <person name="Maeda N."/>
            <person name="Oyama R."/>
            <person name="Ravasi T."/>
            <person name="Lenhard B."/>
            <person name="Wells C."/>
            <person name="Kodzius R."/>
            <person name="Shimokawa K."/>
            <person name="Bajic V.B."/>
            <person name="Brenner S.E."/>
            <person name="Batalov S."/>
            <person name="Forrest A.R."/>
            <person name="Zavolan M."/>
            <person name="Davis M.J."/>
            <person name="Wilming L.G."/>
            <person name="Aidinis V."/>
            <person name="Allen J.E."/>
            <person name="Ambesi-Impiombato A."/>
            <person name="Apweiler R."/>
            <person name="Aturaliya R.N."/>
            <person name="Bailey T.L."/>
            <person name="Bansal M."/>
            <person name="Baxter L."/>
            <person name="Beisel K.W."/>
            <person name="Bersano T."/>
            <person name="Bono H."/>
            <person name="Chalk A.M."/>
            <person name="Chiu K.P."/>
            <person name="Choudhary V."/>
            <person name="Christoffels A."/>
            <person name="Clutterbuck D.R."/>
            <person name="Crowe M.L."/>
            <person name="Dalla E."/>
            <person name="Dalrymple B.P."/>
            <person name="de Bono B."/>
            <person name="Della Gatta G."/>
            <person name="di Bernardo D."/>
            <person name="Down T."/>
            <person name="Engstrom P."/>
            <person name="Fagiolini M."/>
            <person name="Faulkner G."/>
            <person name="Fletcher C.F."/>
            <person name="Fukushima T."/>
            <person name="Furuno M."/>
            <person name="Futaki S."/>
            <person name="Gariboldi M."/>
            <person name="Georgii-Hemming P."/>
            <person name="Gingeras T.R."/>
            <person name="Gojobori T."/>
            <person name="Green R.E."/>
            <person name="Gustincich S."/>
            <person name="Harbers M."/>
            <person name="Hayashi Y."/>
            <person name="Hensch T.K."/>
            <person name="Hirokawa N."/>
            <person name="Hill D."/>
            <person name="Huminiecki L."/>
            <person name="Iacono M."/>
            <person name="Ikeo K."/>
            <person name="Iwama A."/>
            <person name="Ishikawa T."/>
            <person name="Jakt M."/>
            <person name="Kanapin A."/>
            <person name="Katoh M."/>
            <person name="Kawasawa Y."/>
            <person name="Kelso J."/>
            <person name="Kitamura H."/>
            <person name="Kitano H."/>
            <person name="Kollias G."/>
            <person name="Krishnan S.P."/>
            <person name="Kruger A."/>
            <person name="Kummerfeld S.K."/>
            <person name="Kurochkin I.V."/>
            <person name="Lareau L.F."/>
            <person name="Lazarevic D."/>
            <person name="Lipovich L."/>
            <person name="Liu J."/>
            <person name="Liuni S."/>
            <person name="McWilliam S."/>
            <person name="Madan Babu M."/>
            <person name="Madera M."/>
            <person name="Marchionni L."/>
            <person name="Matsuda H."/>
            <person name="Matsuzawa S."/>
            <person name="Miki H."/>
            <person name="Mignone F."/>
            <person name="Miyake S."/>
            <person name="Morris K."/>
            <person name="Mottagui-Tabar S."/>
            <person name="Mulder N."/>
            <person name="Nakano N."/>
            <person name="Nakauchi H."/>
            <person name="Ng P."/>
            <person name="Nilsson R."/>
            <person name="Nishiguchi S."/>
            <person name="Nishikawa S."/>
            <person name="Nori F."/>
            <person name="Ohara O."/>
            <person name="Okazaki Y."/>
            <person name="Orlando V."/>
            <person name="Pang K.C."/>
            <person name="Pavan W.J."/>
            <person name="Pavesi G."/>
            <person name="Pesole G."/>
            <person name="Petrovsky N."/>
            <person name="Piazza S."/>
            <person name="Reed J."/>
            <person name="Reid J.F."/>
            <person name="Ring B.Z."/>
            <person name="Ringwald M."/>
            <person name="Rost B."/>
            <person name="Ruan Y."/>
            <person name="Salzberg S.L."/>
            <person name="Sandelin A."/>
            <person name="Schneider C."/>
            <person name="Schoenbach C."/>
            <person name="Sekiguchi K."/>
            <person name="Semple C.A."/>
            <person name="Seno S."/>
            <person name="Sessa L."/>
            <person name="Sheng Y."/>
            <person name="Shibata Y."/>
            <person name="Shimada H."/>
            <person name="Shimada K."/>
            <person name="Silva D."/>
            <person name="Sinclair B."/>
            <person name="Sperling S."/>
            <person name="Stupka E."/>
            <person name="Sugiura K."/>
            <person name="Sultana R."/>
            <person name="Takenaka Y."/>
            <person name="Taki K."/>
            <person name="Tammoja K."/>
            <person name="Tan S.L."/>
            <person name="Tang S."/>
            <person name="Taylor M.S."/>
            <person name="Tegner J."/>
            <person name="Teichmann S.A."/>
            <person name="Ueda H.R."/>
            <person name="van Nimwegen E."/>
            <person name="Verardo R."/>
            <person name="Wei C.L."/>
            <person name="Yagi K."/>
            <person name="Yamanishi H."/>
            <person name="Zabarovsky E."/>
            <person name="Zhu S."/>
            <person name="Zimmer A."/>
            <person name="Hide W."/>
            <person name="Bult C."/>
            <person name="Grimmond S.M."/>
            <person name="Teasdale R.D."/>
            <person name="Liu E.T."/>
            <person name="Brusic V."/>
            <person name="Quackenbush J."/>
            <person name="Wahlestedt C."/>
            <person name="Mattick J.S."/>
            <person name="Hume D.A."/>
            <person name="Kai C."/>
            <person name="Sasaki D."/>
            <person name="Tomaru Y."/>
            <person name="Fukuda S."/>
            <person name="Kanamori-Katayama M."/>
            <person name="Suzuki M."/>
            <person name="Aoki J."/>
            <person name="Arakawa T."/>
            <person name="Iida J."/>
            <person name="Imamura K."/>
            <person name="Itoh M."/>
            <person name="Kato T."/>
            <person name="Kawaji H."/>
            <person name="Kawagashira N."/>
            <person name="Kawashima T."/>
            <person name="Kojima M."/>
            <person name="Kondo S."/>
            <person name="Konno H."/>
            <person name="Nakano K."/>
            <person name="Ninomiya N."/>
            <person name="Nishio T."/>
            <person name="Okada M."/>
            <person name="Plessy C."/>
            <person name="Shibata K."/>
            <person name="Shiraki T."/>
            <person name="Suzuki S."/>
            <person name="Tagami M."/>
            <person name="Waki K."/>
            <person name="Watahiki A."/>
            <person name="Okamura-Oho Y."/>
            <person name="Suzuki H."/>
            <person name="Kawai J."/>
            <person name="Hayashizaki Y."/>
        </authorList>
    </citation>
    <scope>NUCLEOTIDE SEQUENCE [LARGE SCALE MRNA]</scope>
    <source>
        <strain>BALB/cJ</strain>
        <strain>C57BL/6J</strain>
    </source>
</reference>
<reference key="2">
    <citation type="journal article" date="2004" name="Genome Res.">
        <title>The status, quality, and expansion of the NIH full-length cDNA project: the Mammalian Gene Collection (MGC).</title>
        <authorList>
            <consortium name="The MGC Project Team"/>
        </authorList>
    </citation>
    <scope>NUCLEOTIDE SEQUENCE [LARGE SCALE MRNA]</scope>
    <source>
        <strain>FVB/N</strain>
        <tissue>Mammary tumor</tissue>
    </source>
</reference>
<reference key="3">
    <citation type="journal article" date="2006" name="Proc. Natl. Acad. Sci. U.S.A.">
        <title>Identification of a receptor necessary for Nogo-B stimulated chemotaxis and morphogenesis of endothelial cells.</title>
        <authorList>
            <person name="Miao R.Q."/>
            <person name="Gao Y."/>
            <person name="Harrison K.D."/>
            <person name="Prendergast J."/>
            <person name="Acevedo L.M."/>
            <person name="Yu J."/>
            <person name="Hu F."/>
            <person name="Strittmatter S.M."/>
            <person name="Sessa W.C."/>
        </authorList>
    </citation>
    <scope>TISSUE SPECIFICITY</scope>
</reference>
<reference key="4">
    <citation type="journal article" date="2014" name="Cell Metab.">
        <title>Mutation of Nogo-B receptor, a subunit of cis-prenyltransferase, causes a congenital disorder of glycosylation.</title>
        <authorList>
            <person name="Park E.J."/>
            <person name="Grabinska K.A."/>
            <person name="Guan Z."/>
            <person name="Stranecky V."/>
            <person name="Hartmannova H."/>
            <person name="Hodanova K."/>
            <person name="Baresova V."/>
            <person name="Sovova J."/>
            <person name="Jozsef L."/>
            <person name="Ondruskova N."/>
            <person name="Hansikova H."/>
            <person name="Honzik T."/>
            <person name="Zeman J."/>
            <person name="Hulkova H."/>
            <person name="Wen R."/>
            <person name="Kmoch S."/>
            <person name="Sessa W.C."/>
        </authorList>
    </citation>
    <scope>FUNCTION</scope>
    <scope>DISRUPTION PHENOTYPE</scope>
    <scope>CONDITIONAL KNOCKOUT IN FIBROBLASTS</scope>
</reference>
<reference key="5">
    <citation type="journal article" date="2016" name="EMBO Rep.">
        <title>NgBR is essential for endothelial cell glycosylation and vascular development.</title>
        <authorList>
            <person name="Park E.J."/>
            <person name="Grabinska K.A."/>
            <person name="Guan Z."/>
            <person name="Sessa W.C."/>
        </authorList>
    </citation>
    <scope>DISRUPTION PHENOTYPE</scope>
</reference>
<feature type="chain" id="PRO_0000273168" description="Dehydrodolichyl diphosphate synthase complex subunit Nus1">
    <location>
        <begin position="1"/>
        <end position="297"/>
    </location>
</feature>
<feature type="transmembrane region" description="Helical; Name=1" evidence="1">
    <location>
        <begin position="7"/>
        <end position="26"/>
    </location>
</feature>
<feature type="transmembrane region" description="Helical; Name=2" evidence="1">
    <location>
        <begin position="40"/>
        <end position="56"/>
    </location>
</feature>
<feature type="transmembrane region" description="Helical; Name=3" evidence="1">
    <location>
        <begin position="121"/>
        <end position="139"/>
    </location>
</feature>
<feature type="region of interest" description="Disordered" evidence="3">
    <location>
        <begin position="63"/>
        <end position="86"/>
    </location>
</feature>
<feature type="short sequence motif" description="RXG motif; crucial for prenyltransferase activity" evidence="1">
    <location>
        <begin position="294"/>
        <end position="296"/>
    </location>
</feature>
<feature type="compositionally biased region" description="Basic residues" evidence="3">
    <location>
        <begin position="63"/>
        <end position="73"/>
    </location>
</feature>
<feature type="binding site" evidence="1">
    <location>
        <position position="295"/>
    </location>
    <ligand>
        <name>isopentenyl diphosphate</name>
        <dbReference type="ChEBI" id="CHEBI:128769"/>
    </ligand>
</feature>
<feature type="binding site" evidence="1">
    <location>
        <position position="296"/>
    </location>
    <ligand>
        <name>isopentenyl diphosphate</name>
        <dbReference type="ChEBI" id="CHEBI:128769"/>
    </ligand>
</feature>
<feature type="glycosylation site" description="N-linked (GlcNAc...) asparagine" evidence="2">
    <location>
        <position position="148"/>
    </location>
</feature>
<feature type="glycosylation site" description="N-linked (GlcNAc...) asparagine" evidence="2">
    <location>
        <position position="275"/>
    </location>
</feature>
<feature type="sequence conflict" description="In Ref. 1; BAE39779." evidence="7" ref="1">
    <original>R</original>
    <variation>H</variation>
    <location>
        <position position="29"/>
    </location>
</feature>
<feature type="sequence conflict" description="In Ref. 1; BAE39943." evidence="7" ref="1">
    <original>W</original>
    <variation>L</variation>
    <location>
        <position position="91"/>
    </location>
</feature>
<feature type="sequence conflict" description="In Ref. 1; BAE39943." evidence="7" ref="1">
    <original>Q</original>
    <variation>K</variation>
    <location>
        <position position="213"/>
    </location>
</feature>
<gene>
    <name evidence="8" type="primary">Nus1</name>
    <name type="synonym">D10Ertd438e</name>
    <name type="synonym">Ngbr</name>
</gene>